<gene>
    <name type="primary">mrpl31</name>
    <name type="synonym">nrf20</name>
    <name type="ORF">SPCC16A11.11</name>
</gene>
<feature type="transit peptide" description="Mitochondrion" evidence="2">
    <location>
        <begin position="1"/>
        <end position="23"/>
    </location>
</feature>
<feature type="chain" id="PRO_0000374039" description="Large ribosomal subunit protein mL60">
    <location>
        <begin position="24"/>
        <end position="115"/>
    </location>
</feature>
<feature type="region of interest" description="Disordered" evidence="3">
    <location>
        <begin position="88"/>
        <end position="115"/>
    </location>
</feature>
<feature type="compositionally biased region" description="Polar residues" evidence="3">
    <location>
        <begin position="103"/>
        <end position="115"/>
    </location>
</feature>
<keyword id="KW-0496">Mitochondrion</keyword>
<keyword id="KW-1185">Reference proteome</keyword>
<keyword id="KW-0687">Ribonucleoprotein</keyword>
<keyword id="KW-0689">Ribosomal protein</keyword>
<keyword id="KW-0809">Transit peptide</keyword>
<comment type="function">
    <text evidence="1">Component of the mitochondrial ribosome (mitoribosome), a dedicated translation machinery responsible for the synthesis of mitochondrial genome-encoded proteins, including at least some of the essential transmembrane subunits of the mitochondrial respiratory chain. The mitoribosomes are attached to the mitochondrial inner membrane and translation products are cotranslationally integrated into the membrane.</text>
</comment>
<comment type="subunit">
    <text evidence="1">Component of the mitochondrial large ribosomal subunit (mt-LSU). Mature yeast 74S mitochondrial ribosomes consist of a small (37S) and a large (54S) subunit. The 37S small subunit contains a 15S ribosomal RNA (15S mt-rRNA) and at least 32 different proteins. The 54S large subunit contains a 21S rRNA (21S mt-rRNA) and at least 45 different proteins.</text>
</comment>
<comment type="subcellular location">
    <subcellularLocation>
        <location evidence="4">Mitochondrion</location>
    </subcellularLocation>
</comment>
<comment type="similarity">
    <text evidence="5">Belongs to the mitochondrion-specific ribosomal protein mL60 family.</text>
</comment>
<organism>
    <name type="scientific">Schizosaccharomyces pombe (strain 972 / ATCC 24843)</name>
    <name type="common">Fission yeast</name>
    <dbReference type="NCBI Taxonomy" id="284812"/>
    <lineage>
        <taxon>Eukaryota</taxon>
        <taxon>Fungi</taxon>
        <taxon>Dikarya</taxon>
        <taxon>Ascomycota</taxon>
        <taxon>Taphrinomycotina</taxon>
        <taxon>Schizosaccharomycetes</taxon>
        <taxon>Schizosaccharomycetales</taxon>
        <taxon>Schizosaccharomycetaceae</taxon>
        <taxon>Schizosaccharomyces</taxon>
    </lineage>
</organism>
<protein>
    <recommendedName>
        <fullName evidence="5">Large ribosomal subunit protein mL60</fullName>
    </recommendedName>
    <alternativeName>
        <fullName>54S ribosomal protein L31, mitochondrial</fullName>
    </alternativeName>
    <alternativeName>
        <fullName>Negative regulator of cdc42 protein nrf20</fullName>
    </alternativeName>
</protein>
<accession>Q9UR27</accession>
<proteinExistence type="inferred from homology"/>
<reference key="1">
    <citation type="journal article" date="2000" name="Genetics">
        <title>Isolation and characterization of Nrf1p, a novel negative regulator of the Cdc42p GTPase in Schizosaccharomyces pombe.</title>
        <authorList>
            <person name="Murray J.M."/>
            <person name="Johnson D.I."/>
        </authorList>
    </citation>
    <scope>NUCLEOTIDE SEQUENCE [MRNA]</scope>
</reference>
<reference key="2">
    <citation type="journal article" date="2002" name="Nature">
        <title>The genome sequence of Schizosaccharomyces pombe.</title>
        <authorList>
            <person name="Wood V."/>
            <person name="Gwilliam R."/>
            <person name="Rajandream M.A."/>
            <person name="Lyne M.H."/>
            <person name="Lyne R."/>
            <person name="Stewart A."/>
            <person name="Sgouros J.G."/>
            <person name="Peat N."/>
            <person name="Hayles J."/>
            <person name="Baker S.G."/>
            <person name="Basham D."/>
            <person name="Bowman S."/>
            <person name="Brooks K."/>
            <person name="Brown D."/>
            <person name="Brown S."/>
            <person name="Chillingworth T."/>
            <person name="Churcher C.M."/>
            <person name="Collins M."/>
            <person name="Connor R."/>
            <person name="Cronin A."/>
            <person name="Davis P."/>
            <person name="Feltwell T."/>
            <person name="Fraser A."/>
            <person name="Gentles S."/>
            <person name="Goble A."/>
            <person name="Hamlin N."/>
            <person name="Harris D.E."/>
            <person name="Hidalgo J."/>
            <person name="Hodgson G."/>
            <person name="Holroyd S."/>
            <person name="Hornsby T."/>
            <person name="Howarth S."/>
            <person name="Huckle E.J."/>
            <person name="Hunt S."/>
            <person name="Jagels K."/>
            <person name="James K.D."/>
            <person name="Jones L."/>
            <person name="Jones M."/>
            <person name="Leather S."/>
            <person name="McDonald S."/>
            <person name="McLean J."/>
            <person name="Mooney P."/>
            <person name="Moule S."/>
            <person name="Mungall K.L."/>
            <person name="Murphy L.D."/>
            <person name="Niblett D."/>
            <person name="Odell C."/>
            <person name="Oliver K."/>
            <person name="O'Neil S."/>
            <person name="Pearson D."/>
            <person name="Quail M.A."/>
            <person name="Rabbinowitsch E."/>
            <person name="Rutherford K.M."/>
            <person name="Rutter S."/>
            <person name="Saunders D."/>
            <person name="Seeger K."/>
            <person name="Sharp S."/>
            <person name="Skelton J."/>
            <person name="Simmonds M.N."/>
            <person name="Squares R."/>
            <person name="Squares S."/>
            <person name="Stevens K."/>
            <person name="Taylor K."/>
            <person name="Taylor R.G."/>
            <person name="Tivey A."/>
            <person name="Walsh S.V."/>
            <person name="Warren T."/>
            <person name="Whitehead S."/>
            <person name="Woodward J.R."/>
            <person name="Volckaert G."/>
            <person name="Aert R."/>
            <person name="Robben J."/>
            <person name="Grymonprez B."/>
            <person name="Weltjens I."/>
            <person name="Vanstreels E."/>
            <person name="Rieger M."/>
            <person name="Schaefer M."/>
            <person name="Mueller-Auer S."/>
            <person name="Gabel C."/>
            <person name="Fuchs M."/>
            <person name="Duesterhoeft A."/>
            <person name="Fritzc C."/>
            <person name="Holzer E."/>
            <person name="Moestl D."/>
            <person name="Hilbert H."/>
            <person name="Borzym K."/>
            <person name="Langer I."/>
            <person name="Beck A."/>
            <person name="Lehrach H."/>
            <person name="Reinhardt R."/>
            <person name="Pohl T.M."/>
            <person name="Eger P."/>
            <person name="Zimmermann W."/>
            <person name="Wedler H."/>
            <person name="Wambutt R."/>
            <person name="Purnelle B."/>
            <person name="Goffeau A."/>
            <person name="Cadieu E."/>
            <person name="Dreano S."/>
            <person name="Gloux S."/>
            <person name="Lelaure V."/>
            <person name="Mottier S."/>
            <person name="Galibert F."/>
            <person name="Aves S.J."/>
            <person name="Xiang Z."/>
            <person name="Hunt C."/>
            <person name="Moore K."/>
            <person name="Hurst S.M."/>
            <person name="Lucas M."/>
            <person name="Rochet M."/>
            <person name="Gaillardin C."/>
            <person name="Tallada V.A."/>
            <person name="Garzon A."/>
            <person name="Thode G."/>
            <person name="Daga R.R."/>
            <person name="Cruzado L."/>
            <person name="Jimenez J."/>
            <person name="Sanchez M."/>
            <person name="del Rey F."/>
            <person name="Benito J."/>
            <person name="Dominguez A."/>
            <person name="Revuelta J.L."/>
            <person name="Moreno S."/>
            <person name="Armstrong J."/>
            <person name="Forsburg S.L."/>
            <person name="Cerutti L."/>
            <person name="Lowe T."/>
            <person name="McCombie W.R."/>
            <person name="Paulsen I."/>
            <person name="Potashkin J."/>
            <person name="Shpakovski G.V."/>
            <person name="Ussery D."/>
            <person name="Barrell B.G."/>
            <person name="Nurse P."/>
        </authorList>
    </citation>
    <scope>NUCLEOTIDE SEQUENCE [LARGE SCALE GENOMIC DNA]</scope>
    <source>
        <strain>972 / ATCC 24843</strain>
    </source>
</reference>
<reference key="3">
    <citation type="journal article" date="2006" name="Nat. Biotechnol.">
        <title>ORFeome cloning and global analysis of protein localization in the fission yeast Schizosaccharomyces pombe.</title>
        <authorList>
            <person name="Matsuyama A."/>
            <person name="Arai R."/>
            <person name="Yashiroda Y."/>
            <person name="Shirai A."/>
            <person name="Kamata A."/>
            <person name="Sekido S."/>
            <person name="Kobayashi Y."/>
            <person name="Hashimoto A."/>
            <person name="Hamamoto M."/>
            <person name="Hiraoka Y."/>
            <person name="Horinouchi S."/>
            <person name="Yoshida M."/>
        </authorList>
    </citation>
    <scope>SUBCELLULAR LOCATION [LARGE SCALE ANALYSIS]</scope>
</reference>
<sequence>MLGAFNSTLARFGGLVHKVPWRLSQRRKYRHRQRLRAVDEVVDVLRTALQEKNQSCKRIESFVANHQPESQMSPKDKYTMFTRKTQGAGLQGFRKGVHKSPKWTRSTNRVNPTGF</sequence>
<dbReference type="EMBL" id="AF087833">
    <property type="protein sequence ID" value="AAD53228.1"/>
    <property type="molecule type" value="mRNA"/>
</dbReference>
<dbReference type="EMBL" id="CU329672">
    <property type="protein sequence ID" value="CAB53083.1"/>
    <property type="molecule type" value="Genomic_DNA"/>
</dbReference>
<dbReference type="PIR" id="T41084">
    <property type="entry name" value="T41084"/>
</dbReference>
<dbReference type="RefSeq" id="NP_587998.1">
    <property type="nucleotide sequence ID" value="NM_001022989.2"/>
</dbReference>
<dbReference type="SMR" id="Q9UR27"/>
<dbReference type="ComplexPortal" id="CPX-10323">
    <property type="entry name" value="54S mitochondrial large ribosomal subunit"/>
</dbReference>
<dbReference type="FunCoup" id="Q9UR27">
    <property type="interactions" value="51"/>
</dbReference>
<dbReference type="STRING" id="284812.Q9UR27"/>
<dbReference type="iPTMnet" id="Q9UR27"/>
<dbReference type="PaxDb" id="4896-SPCC16A11.11.1"/>
<dbReference type="EnsemblFungi" id="SPCC16A11.11.1">
    <property type="protein sequence ID" value="SPCC16A11.11.1:pep"/>
    <property type="gene ID" value="SPCC16A11.11"/>
</dbReference>
<dbReference type="GeneID" id="2538813"/>
<dbReference type="KEGG" id="spo:2538813"/>
<dbReference type="PomBase" id="SPCC16A11.11">
    <property type="gene designation" value="mrpl31"/>
</dbReference>
<dbReference type="VEuPathDB" id="FungiDB:SPCC16A11.11"/>
<dbReference type="eggNOG" id="ENOG502S81F">
    <property type="taxonomic scope" value="Eukaryota"/>
</dbReference>
<dbReference type="HOGENOM" id="CLU_141719_0_0_1"/>
<dbReference type="InParanoid" id="Q9UR27"/>
<dbReference type="OMA" id="HLVPKWT"/>
<dbReference type="PhylomeDB" id="Q9UR27"/>
<dbReference type="PRO" id="PR:Q9UR27"/>
<dbReference type="Proteomes" id="UP000002485">
    <property type="component" value="Chromosome III"/>
</dbReference>
<dbReference type="GO" id="GO:0005762">
    <property type="term" value="C:mitochondrial large ribosomal subunit"/>
    <property type="evidence" value="ECO:0000318"/>
    <property type="project" value="GO_Central"/>
</dbReference>
<dbReference type="GO" id="GO:0005739">
    <property type="term" value="C:mitochondrion"/>
    <property type="evidence" value="ECO:0007005"/>
    <property type="project" value="PomBase"/>
</dbReference>
<dbReference type="GO" id="GO:0003735">
    <property type="term" value="F:structural constituent of ribosome"/>
    <property type="evidence" value="ECO:0000318"/>
    <property type="project" value="GO_Central"/>
</dbReference>
<dbReference type="GO" id="GO:0032543">
    <property type="term" value="P:mitochondrial translation"/>
    <property type="evidence" value="ECO:0000250"/>
    <property type="project" value="PomBase"/>
</dbReference>
<dbReference type="InterPro" id="IPR016340">
    <property type="entry name" value="Ribosomal_mL60"/>
</dbReference>
<dbReference type="PANTHER" id="PTHR28271">
    <property type="entry name" value="54S RIBOSOMAL PROTEIN L31, MITOCHONDRIAL"/>
    <property type="match status" value="1"/>
</dbReference>
<dbReference type="PANTHER" id="PTHR28271:SF1">
    <property type="entry name" value="LARGE RIBOSOMAL SUBUNIT PROTEIN ML60"/>
    <property type="match status" value="1"/>
</dbReference>
<dbReference type="Pfam" id="PF09784">
    <property type="entry name" value="L31"/>
    <property type="match status" value="1"/>
</dbReference>
<dbReference type="PIRSF" id="PIRSF002216">
    <property type="entry name" value="MRPL31_prd"/>
    <property type="match status" value="1"/>
</dbReference>
<name>RM31_SCHPO</name>
<evidence type="ECO:0000250" key="1">
    <source>
        <dbReference type="UniProtKB" id="P14063"/>
    </source>
</evidence>
<evidence type="ECO:0000255" key="2"/>
<evidence type="ECO:0000256" key="3">
    <source>
        <dbReference type="SAM" id="MobiDB-lite"/>
    </source>
</evidence>
<evidence type="ECO:0000269" key="4">
    <source>
    </source>
</evidence>
<evidence type="ECO:0000305" key="5"/>